<protein>
    <recommendedName>
        <fullName evidence="1">pH-sensitive chloride channel 2</fullName>
    </recommendedName>
    <alternativeName>
        <fullName evidence="6">Ligand-gated chloride channel protein hodor</fullName>
    </alternativeName>
</protein>
<dbReference type="EMBL" id="AAAB01008980">
    <property type="status" value="NOT_ANNOTATED_CDS"/>
    <property type="molecule type" value="Genomic_DNA"/>
</dbReference>
<dbReference type="SMR" id="A0A1S4H2E2"/>
<dbReference type="FunCoup" id="A0A1S4H2E2">
    <property type="interactions" value="3"/>
</dbReference>
<dbReference type="GlyCosmos" id="A0A1S4H2E2">
    <property type="glycosylation" value="6 sites, No reported glycans"/>
</dbReference>
<dbReference type="EnsemblMetazoa" id="AGAP009616-RA">
    <property type="protein sequence ID" value="AGAP009616-PA"/>
    <property type="gene ID" value="AGAP009616"/>
</dbReference>
<dbReference type="VEuPathDB" id="VectorBase:AGAMI1_012180"/>
<dbReference type="VEuPathDB" id="VectorBase:AGAP009616"/>
<dbReference type="InParanoid" id="A0A1S4H2E2"/>
<dbReference type="Proteomes" id="UP000007062">
    <property type="component" value="Chromosome 3R"/>
</dbReference>
<dbReference type="GO" id="GO:0005886">
    <property type="term" value="C:plasma membrane"/>
    <property type="evidence" value="ECO:0007669"/>
    <property type="project" value="UniProtKB-SubCell"/>
</dbReference>
<dbReference type="GO" id="GO:0005254">
    <property type="term" value="F:chloride channel activity"/>
    <property type="evidence" value="ECO:0007669"/>
    <property type="project" value="UniProtKB-ARBA"/>
</dbReference>
<dbReference type="GO" id="GO:0005230">
    <property type="term" value="F:extracellular ligand-gated monoatomic ion channel activity"/>
    <property type="evidence" value="ECO:0007669"/>
    <property type="project" value="InterPro"/>
</dbReference>
<dbReference type="GO" id="GO:0099095">
    <property type="term" value="F:ligand-gated monoatomic anion channel activity"/>
    <property type="evidence" value="ECO:0007669"/>
    <property type="project" value="UniProtKB-ARBA"/>
</dbReference>
<dbReference type="GO" id="GO:0004888">
    <property type="term" value="F:transmembrane signaling receptor activity"/>
    <property type="evidence" value="ECO:0007669"/>
    <property type="project" value="InterPro"/>
</dbReference>
<dbReference type="GO" id="GO:1902476">
    <property type="term" value="P:chloride transmembrane transport"/>
    <property type="evidence" value="ECO:0000318"/>
    <property type="project" value="GO_Central"/>
</dbReference>
<dbReference type="CDD" id="cd18987">
    <property type="entry name" value="LGIC_ECD_anion"/>
    <property type="match status" value="1"/>
</dbReference>
<dbReference type="CDD" id="cd19049">
    <property type="entry name" value="LGIC_TM_anion"/>
    <property type="match status" value="1"/>
</dbReference>
<dbReference type="FunFam" id="2.70.170.10:FF:000042">
    <property type="entry name" value="Blast:Glycine receptor subunit alpha-3"/>
    <property type="match status" value="1"/>
</dbReference>
<dbReference type="Gene3D" id="2.70.170.10">
    <property type="entry name" value="Neurotransmitter-gated ion-channel ligand-binding domain"/>
    <property type="match status" value="1"/>
</dbReference>
<dbReference type="Gene3D" id="1.20.58.390">
    <property type="entry name" value="Neurotransmitter-gated ion-channel transmembrane domain"/>
    <property type="match status" value="1"/>
</dbReference>
<dbReference type="InterPro" id="IPR006028">
    <property type="entry name" value="GABAA/Glycine_rcpt"/>
</dbReference>
<dbReference type="InterPro" id="IPR006202">
    <property type="entry name" value="Neur_chan_lig-bd"/>
</dbReference>
<dbReference type="InterPro" id="IPR036734">
    <property type="entry name" value="Neur_chan_lig-bd_sf"/>
</dbReference>
<dbReference type="InterPro" id="IPR006201">
    <property type="entry name" value="Neur_channel"/>
</dbReference>
<dbReference type="InterPro" id="IPR036719">
    <property type="entry name" value="Neuro-gated_channel_TM_sf"/>
</dbReference>
<dbReference type="InterPro" id="IPR038050">
    <property type="entry name" value="Neuro_actylchol_rec"/>
</dbReference>
<dbReference type="InterPro" id="IPR006029">
    <property type="entry name" value="Neurotrans-gated_channel_TM"/>
</dbReference>
<dbReference type="InterPro" id="IPR018000">
    <property type="entry name" value="Neurotransmitter_ion_chnl_CS"/>
</dbReference>
<dbReference type="PANTHER" id="PTHR18945">
    <property type="entry name" value="NEUROTRANSMITTER GATED ION CHANNEL"/>
    <property type="match status" value="1"/>
</dbReference>
<dbReference type="Pfam" id="PF02931">
    <property type="entry name" value="Neur_chan_LBD"/>
    <property type="match status" value="1"/>
</dbReference>
<dbReference type="Pfam" id="PF02932">
    <property type="entry name" value="Neur_chan_memb"/>
    <property type="match status" value="1"/>
</dbReference>
<dbReference type="PRINTS" id="PR00253">
    <property type="entry name" value="GABAARECEPTR"/>
</dbReference>
<dbReference type="PRINTS" id="PR00252">
    <property type="entry name" value="NRIONCHANNEL"/>
</dbReference>
<dbReference type="SUPFAM" id="SSF90112">
    <property type="entry name" value="Neurotransmitter-gated ion-channel transmembrane pore"/>
    <property type="match status" value="1"/>
</dbReference>
<dbReference type="SUPFAM" id="SSF63712">
    <property type="entry name" value="Nicotinic receptor ligand binding domain-like"/>
    <property type="match status" value="1"/>
</dbReference>
<dbReference type="PROSITE" id="PS00236">
    <property type="entry name" value="NEUROTR_ION_CHANNEL"/>
    <property type="match status" value="1"/>
</dbReference>
<keyword id="KW-1003">Cell membrane</keyword>
<keyword id="KW-0325">Glycoprotein</keyword>
<keyword id="KW-0407">Ion channel</keyword>
<keyword id="KW-0406">Ion transport</keyword>
<keyword id="KW-1071">Ligand-gated ion channel</keyword>
<keyword id="KW-0472">Membrane</keyword>
<keyword id="KW-1185">Reference proteome</keyword>
<keyword id="KW-0732">Signal</keyword>
<keyword id="KW-0812">Transmembrane</keyword>
<keyword id="KW-1133">Transmembrane helix</keyword>
<keyword id="KW-0813">Transport</keyword>
<proteinExistence type="inferred from homology"/>
<comment type="function">
    <text evidence="1">Ligand and pH-gated channel that mediates chloride transport in the mid-gut and thereby may function in larval metabolism and fluid homeostasis. Channel opening is triggered by zinc binding or, to a lesser extent, an increase in extracellular pH.</text>
</comment>
<comment type="catalytic activity">
    <reaction evidence="1">
        <text>chloride(in) = chloride(out)</text>
        <dbReference type="Rhea" id="RHEA:29823"/>
        <dbReference type="ChEBI" id="CHEBI:17996"/>
    </reaction>
    <physiologicalReaction direction="left-to-right" evidence="1">
        <dbReference type="Rhea" id="RHEA:29824"/>
    </physiologicalReaction>
</comment>
<comment type="subcellular location">
    <subcellularLocation>
        <location evidence="1">Cell membrane</location>
        <topology evidence="2">Multi-pass membrane protein</topology>
    </subcellularLocation>
</comment>
<comment type="disruption phenotype">
    <text evidence="5">Adults are infertile.</text>
</comment>
<comment type="similarity">
    <text evidence="7">Belongs to the ligand-gated ion channel (TC 1.A.9) family.</text>
</comment>
<sequence>MHSPGAAAYVFLQCLVALVAAVIAQSGADQPPTTVVEVTAHGSVSMTPPTPRSPLLNETELVELNQPGSTAVFVALPTNPPTVSVDSSSTTTVASTQEPTSTTERTMSPEEIQKLLLPPATVEADILHVNATDDNRPDAKSSGKDSECPTLEGADHLSQTQLLTRLTHVCRYDRLERPKRESINGTNGPVKVYARAYIYFMQNLEAHDLQFKIHALLQFRYVDPRLVFREVAPNRTKPIMGEQSLRDLLWVPHVFLANERSSDILGTAEKDILTSISPDGTVIVSTRISATLYCWMNLQKFPFDEQHCSTVLESWMYNEDDLVLLWEHKSPVTLAPELHLTEYVLLEMFTNETVINADLSDLRHGAFAGNYSSLSFTVHLAREMGFYMMDYFIPSIMLVAISWVTFWLQADQSAPRITLGTSTMLTFITLASAQGKTLPKVSYIKASEIWFLGCTGFIFGSLVEFAFVNTIWRRKRNVEVKKVNSKHVLKQAITPRPARKDMSGLHKSHSCTSLADSATTVSANSFNNYLTVHSIPQKSPSSATLPIISTTDVDRAMTEASNVTIQIEGQTSNVNGNGWTTMTPQEVAIWIDKRSRFVFPIAFVIFNIFYWTFVYYV</sequence>
<name>PHCL2_ANOGA</name>
<evidence type="ECO:0000250" key="1">
    <source>
        <dbReference type="UniProtKB" id="Q9V9Y4"/>
    </source>
</evidence>
<evidence type="ECO:0000255" key="2"/>
<evidence type="ECO:0000255" key="3">
    <source>
        <dbReference type="PROSITE-ProRule" id="PRU00498"/>
    </source>
</evidence>
<evidence type="ECO:0000256" key="4">
    <source>
        <dbReference type="SAM" id="MobiDB-lite"/>
    </source>
</evidence>
<evidence type="ECO:0000269" key="5">
    <source>
    </source>
</evidence>
<evidence type="ECO:0000303" key="6">
    <source>
    </source>
</evidence>
<evidence type="ECO:0000305" key="7"/>
<reference evidence="7" key="1">
    <citation type="journal article" date="2002" name="Science">
        <title>The genome sequence of the malaria mosquito Anopheles gambiae.</title>
        <authorList>
            <person name="Holt R.A."/>
            <person name="Subramanian G.M."/>
            <person name="Halpern A."/>
            <person name="Sutton G.G."/>
            <person name="Charlab R."/>
            <person name="Nusskern D.R."/>
            <person name="Wincker P."/>
            <person name="Clark A.G."/>
            <person name="Ribeiro J.M.C."/>
            <person name="Wides R."/>
            <person name="Salzberg S.L."/>
            <person name="Loftus B.J."/>
            <person name="Yandell M.D."/>
            <person name="Majoros W.H."/>
            <person name="Rusch D.B."/>
            <person name="Lai Z."/>
            <person name="Kraft C.L."/>
            <person name="Abril J.F."/>
            <person name="Anthouard V."/>
            <person name="Arensburger P."/>
            <person name="Atkinson P.W."/>
            <person name="Baden H."/>
            <person name="de Berardinis V."/>
            <person name="Baldwin D."/>
            <person name="Benes V."/>
            <person name="Biedler J."/>
            <person name="Blass C."/>
            <person name="Bolanos R."/>
            <person name="Boscus D."/>
            <person name="Barnstead M."/>
            <person name="Cai S."/>
            <person name="Center A."/>
            <person name="Chaturverdi K."/>
            <person name="Christophides G.K."/>
            <person name="Chrystal M.A.M."/>
            <person name="Clamp M."/>
            <person name="Cravchik A."/>
            <person name="Curwen V."/>
            <person name="Dana A."/>
            <person name="Delcher A."/>
            <person name="Dew I."/>
            <person name="Evans C.A."/>
            <person name="Flanigan M."/>
            <person name="Grundschober-Freimoser A."/>
            <person name="Friedli L."/>
            <person name="Gu Z."/>
            <person name="Guan P."/>
            <person name="Guigo R."/>
            <person name="Hillenmeyer M.E."/>
            <person name="Hladun S.L."/>
            <person name="Hogan J.R."/>
            <person name="Hong Y.S."/>
            <person name="Hoover J."/>
            <person name="Jaillon O."/>
            <person name="Ke Z."/>
            <person name="Kodira C.D."/>
            <person name="Kokoza E."/>
            <person name="Koutsos A."/>
            <person name="Letunic I."/>
            <person name="Levitsky A.A."/>
            <person name="Liang Y."/>
            <person name="Lin J.-J."/>
            <person name="Lobo N.F."/>
            <person name="Lopez J.R."/>
            <person name="Malek J.A."/>
            <person name="McIntosh T.C."/>
            <person name="Meister S."/>
            <person name="Miller J.R."/>
            <person name="Mobarry C."/>
            <person name="Mongin E."/>
            <person name="Murphy S.D."/>
            <person name="O'Brochta D.A."/>
            <person name="Pfannkoch C."/>
            <person name="Qi R."/>
            <person name="Regier M.A."/>
            <person name="Remington K."/>
            <person name="Shao H."/>
            <person name="Sharakhova M.V."/>
            <person name="Sitter C.D."/>
            <person name="Shetty J."/>
            <person name="Smith T.J."/>
            <person name="Strong R."/>
            <person name="Sun J."/>
            <person name="Thomasova D."/>
            <person name="Ton L.Q."/>
            <person name="Topalis P."/>
            <person name="Tu Z.J."/>
            <person name="Unger M.F."/>
            <person name="Walenz B."/>
            <person name="Wang A.H."/>
            <person name="Wang J."/>
            <person name="Wang M."/>
            <person name="Wang X."/>
            <person name="Woodford K.J."/>
            <person name="Wortman J.R."/>
            <person name="Wu M."/>
            <person name="Yao A."/>
            <person name="Zdobnov E.M."/>
            <person name="Zhang H."/>
            <person name="Zhao Q."/>
            <person name="Zhao S."/>
            <person name="Zhu S.C."/>
            <person name="Zhimulev I."/>
            <person name="Coluzzi M."/>
            <person name="della Torre A."/>
            <person name="Roth C.W."/>
            <person name="Louis C."/>
            <person name="Kalush F."/>
            <person name="Mural R.J."/>
            <person name="Myers E.W."/>
            <person name="Adams M.D."/>
            <person name="Smith H.O."/>
            <person name="Broder S."/>
            <person name="Gardner M.J."/>
            <person name="Fraser C.M."/>
            <person name="Birney E."/>
            <person name="Bork P."/>
            <person name="Brey P.T."/>
            <person name="Venter J.C."/>
            <person name="Weissenbach J."/>
            <person name="Kafatos F.C."/>
            <person name="Collins F.H."/>
            <person name="Hoffman S.L."/>
        </authorList>
    </citation>
    <scope>NUCLEOTIDE SEQUENCE [LARGE SCALE GENOMIC DNA]</scope>
    <source>
        <strain>PEST</strain>
    </source>
</reference>
<reference evidence="7" key="2">
    <citation type="journal article" date="2020" name="Nature">
        <title>An intestinal zinc sensor regulates food intake and developmental growth.</title>
        <authorList>
            <person name="Redhai S."/>
            <person name="Pilgrim C."/>
            <person name="Gaspar P."/>
            <person name="Giesen L.V."/>
            <person name="Lopes T."/>
            <person name="Riabinina O."/>
            <person name="Grenier T."/>
            <person name="Milona A."/>
            <person name="Chanana B."/>
            <person name="Swadling J.B."/>
            <person name="Wang Y.F."/>
            <person name="Dahalan F."/>
            <person name="Yuan M."/>
            <person name="Wilsch-Brauninger M."/>
            <person name="Lin W.H."/>
            <person name="Dennison N."/>
            <person name="Capriotti P."/>
            <person name="Lawniczak M.K.N."/>
            <person name="Baines R.A."/>
            <person name="Warnecke T."/>
            <person name="Windbichler N."/>
            <person name="Leulier F."/>
            <person name="Bellono N.W."/>
            <person name="Miguel-Aliaga I."/>
        </authorList>
    </citation>
    <scope>DISRUPTION PHENOTYPE</scope>
</reference>
<accession>A0A1S4H2E2</accession>
<feature type="signal peptide" evidence="2">
    <location>
        <begin position="1"/>
        <end position="28"/>
    </location>
</feature>
<feature type="chain" id="PRO_5022251841" description="pH-sensitive chloride channel 2">
    <location>
        <begin position="29"/>
        <end position="617"/>
    </location>
</feature>
<feature type="topological domain" description="Extracellular" evidence="7">
    <location>
        <begin position="29"/>
        <end position="387"/>
    </location>
</feature>
<feature type="transmembrane region" description="Helical; Name=1" evidence="2">
    <location>
        <begin position="388"/>
        <end position="408"/>
    </location>
</feature>
<feature type="topological domain" description="Cytoplasmic" evidence="7">
    <location>
        <begin position="409"/>
        <end position="414"/>
    </location>
</feature>
<feature type="transmembrane region" description="Helical; Name=2" evidence="2">
    <location>
        <begin position="415"/>
        <end position="434"/>
    </location>
</feature>
<feature type="topological domain" description="Extracellular" evidence="7">
    <location>
        <begin position="435"/>
        <end position="447"/>
    </location>
</feature>
<feature type="transmembrane region" description="Helical; Name=3" evidence="2">
    <location>
        <begin position="448"/>
        <end position="468"/>
    </location>
</feature>
<feature type="topological domain" description="Cytoplasmic" evidence="7">
    <location>
        <begin position="469"/>
        <end position="596"/>
    </location>
</feature>
<feature type="transmembrane region" description="Helical; Name=4" evidence="2">
    <location>
        <begin position="597"/>
        <end position="617"/>
    </location>
</feature>
<feature type="region of interest" description="Disordered" evidence="4">
    <location>
        <begin position="82"/>
        <end position="110"/>
    </location>
</feature>
<feature type="region of interest" description="Disordered" evidence="4">
    <location>
        <begin position="131"/>
        <end position="155"/>
    </location>
</feature>
<feature type="compositionally biased region" description="Low complexity" evidence="4">
    <location>
        <begin position="82"/>
        <end position="96"/>
    </location>
</feature>
<feature type="compositionally biased region" description="Polar residues" evidence="4">
    <location>
        <begin position="97"/>
        <end position="106"/>
    </location>
</feature>
<feature type="compositionally biased region" description="Basic and acidic residues" evidence="4">
    <location>
        <begin position="131"/>
        <end position="147"/>
    </location>
</feature>
<feature type="glycosylation site" description="N-linked (GlcNAc...) asparagine" evidence="3">
    <location>
        <position position="57"/>
    </location>
</feature>
<feature type="glycosylation site" description="N-linked (GlcNAc...) asparagine" evidence="3">
    <location>
        <position position="130"/>
    </location>
</feature>
<feature type="glycosylation site" description="N-linked (GlcNAc...) asparagine" evidence="3">
    <location>
        <position position="184"/>
    </location>
</feature>
<feature type="glycosylation site" description="N-linked (GlcNAc...) asparagine" evidence="3">
    <location>
        <position position="234"/>
    </location>
</feature>
<feature type="glycosylation site" description="N-linked (GlcNAc...) asparagine" evidence="3">
    <location>
        <position position="351"/>
    </location>
</feature>
<feature type="glycosylation site" description="N-linked (GlcNAc...) asparagine" evidence="3">
    <location>
        <position position="370"/>
    </location>
</feature>
<gene>
    <name evidence="1" type="primary">pHCl-2</name>
    <name evidence="6" type="synonym">hodor</name>
</gene>
<organism>
    <name type="scientific">Anopheles gambiae</name>
    <name type="common">African malaria mosquito</name>
    <dbReference type="NCBI Taxonomy" id="7165"/>
    <lineage>
        <taxon>Eukaryota</taxon>
        <taxon>Metazoa</taxon>
        <taxon>Ecdysozoa</taxon>
        <taxon>Arthropoda</taxon>
        <taxon>Hexapoda</taxon>
        <taxon>Insecta</taxon>
        <taxon>Pterygota</taxon>
        <taxon>Neoptera</taxon>
        <taxon>Endopterygota</taxon>
        <taxon>Diptera</taxon>
        <taxon>Nematocera</taxon>
        <taxon>Culicoidea</taxon>
        <taxon>Culicidae</taxon>
        <taxon>Anophelinae</taxon>
        <taxon>Anopheles</taxon>
    </lineage>
</organism>